<feature type="chain" id="PRO_0000250129" description="3-isopropylmalate dehydrogenase">
    <location>
        <begin position="1"/>
        <end position="370"/>
    </location>
</feature>
<feature type="binding site" evidence="1">
    <location>
        <begin position="77"/>
        <end position="90"/>
    </location>
    <ligand>
        <name>NAD(+)</name>
        <dbReference type="ChEBI" id="CHEBI:57540"/>
    </ligand>
</feature>
<feature type="binding site" evidence="1">
    <location>
        <position position="97"/>
    </location>
    <ligand>
        <name>substrate</name>
    </ligand>
</feature>
<feature type="binding site" evidence="1">
    <location>
        <position position="107"/>
    </location>
    <ligand>
        <name>substrate</name>
    </ligand>
</feature>
<feature type="binding site" evidence="1">
    <location>
        <position position="135"/>
    </location>
    <ligand>
        <name>substrate</name>
    </ligand>
</feature>
<feature type="binding site" evidence="1">
    <location>
        <position position="226"/>
    </location>
    <ligand>
        <name>Mg(2+)</name>
        <dbReference type="ChEBI" id="CHEBI:18420"/>
    </ligand>
</feature>
<feature type="binding site" evidence="1">
    <location>
        <position position="226"/>
    </location>
    <ligand>
        <name>substrate</name>
    </ligand>
</feature>
<feature type="binding site" evidence="1">
    <location>
        <position position="250"/>
    </location>
    <ligand>
        <name>Mg(2+)</name>
        <dbReference type="ChEBI" id="CHEBI:18420"/>
    </ligand>
</feature>
<feature type="binding site" evidence="1">
    <location>
        <position position="254"/>
    </location>
    <ligand>
        <name>Mg(2+)</name>
        <dbReference type="ChEBI" id="CHEBI:18420"/>
    </ligand>
</feature>
<feature type="binding site" evidence="1">
    <location>
        <begin position="290"/>
        <end position="302"/>
    </location>
    <ligand>
        <name>NAD(+)</name>
        <dbReference type="ChEBI" id="CHEBI:57540"/>
    </ligand>
</feature>
<feature type="site" description="Important for catalysis" evidence="1">
    <location>
        <position position="142"/>
    </location>
</feature>
<feature type="site" description="Important for catalysis" evidence="1">
    <location>
        <position position="193"/>
    </location>
</feature>
<proteinExistence type="inferred from homology"/>
<evidence type="ECO:0000255" key="1">
    <source>
        <dbReference type="HAMAP-Rule" id="MF_01033"/>
    </source>
</evidence>
<comment type="function">
    <text evidence="1">Catalyzes the oxidation of 3-carboxy-2-hydroxy-4-methylpentanoate (3-isopropylmalate) to 3-carboxy-4-methyl-2-oxopentanoate. The product decarboxylates to 4-methyl-2 oxopentanoate.</text>
</comment>
<comment type="catalytic activity">
    <reaction evidence="1">
        <text>(2R,3S)-3-isopropylmalate + NAD(+) = 4-methyl-2-oxopentanoate + CO2 + NADH</text>
        <dbReference type="Rhea" id="RHEA:32271"/>
        <dbReference type="ChEBI" id="CHEBI:16526"/>
        <dbReference type="ChEBI" id="CHEBI:17865"/>
        <dbReference type="ChEBI" id="CHEBI:35121"/>
        <dbReference type="ChEBI" id="CHEBI:57540"/>
        <dbReference type="ChEBI" id="CHEBI:57945"/>
        <dbReference type="EC" id="1.1.1.85"/>
    </reaction>
</comment>
<comment type="cofactor">
    <cofactor evidence="1">
        <name>Mg(2+)</name>
        <dbReference type="ChEBI" id="CHEBI:18420"/>
    </cofactor>
    <cofactor evidence="1">
        <name>Mn(2+)</name>
        <dbReference type="ChEBI" id="CHEBI:29035"/>
    </cofactor>
    <text evidence="1">Binds 1 Mg(2+) or Mn(2+) ion per subunit.</text>
</comment>
<comment type="pathway">
    <text evidence="1">Amino-acid biosynthesis; L-leucine biosynthesis; L-leucine from 3-methyl-2-oxobutanoate: step 3/4.</text>
</comment>
<comment type="subunit">
    <text evidence="1">Homodimer.</text>
</comment>
<comment type="subcellular location">
    <subcellularLocation>
        <location evidence="1">Cytoplasm</location>
    </subcellularLocation>
</comment>
<comment type="similarity">
    <text evidence="1">Belongs to the isocitrate and isopropylmalate dehydrogenases family. LeuB type 1 subfamily.</text>
</comment>
<sequence>MTARNLFLLPGDGIGPEAMGEVRKIIAYMNEAMDAGFVTDEGLVGGCAYDAHGAAISEADMQKALAADAVLFGAVGGPKWDSVPYEVRPEAGLLRLRKDLQLFANLRPAICYPALASASSLKPELVEGLDILIIRELTGGVYFGEPKEIIDLGNGQKRGIDTQVYDTYEIERIAGVAFEMARTRQNRVCSMEKRNVMKSGVLWNQVVTETHKAKYSDVQLEHMLADAGGMQLVRQPKQFDVIVTDNLFGDMLSDVAAMLTGSLGMLPSASLGAPDGKTGKRKALYEPVHGSAPDIAGKGIANPIAMIASFAMCLRYSFNMVKEADDLEKAIANVLDKGIRTGDIMADGCRQVGTVEMGEAILAEFKALSA</sequence>
<accession>Q2K2V0</accession>
<dbReference type="EC" id="1.1.1.85" evidence="1"/>
<dbReference type="EMBL" id="CP000133">
    <property type="protein sequence ID" value="ABC92836.1"/>
    <property type="molecule type" value="Genomic_DNA"/>
</dbReference>
<dbReference type="RefSeq" id="WP_011427274.1">
    <property type="nucleotide sequence ID" value="NC_007761.1"/>
</dbReference>
<dbReference type="SMR" id="Q2K2V0"/>
<dbReference type="KEGG" id="ret:RHE_CH04093"/>
<dbReference type="eggNOG" id="COG0473">
    <property type="taxonomic scope" value="Bacteria"/>
</dbReference>
<dbReference type="HOGENOM" id="CLU_031953_0_3_5"/>
<dbReference type="OrthoDB" id="9767905at2"/>
<dbReference type="UniPathway" id="UPA00048">
    <property type="reaction ID" value="UER00072"/>
</dbReference>
<dbReference type="Proteomes" id="UP000001936">
    <property type="component" value="Chromosome"/>
</dbReference>
<dbReference type="GO" id="GO:0005829">
    <property type="term" value="C:cytosol"/>
    <property type="evidence" value="ECO:0007669"/>
    <property type="project" value="TreeGrafter"/>
</dbReference>
<dbReference type="GO" id="GO:0003862">
    <property type="term" value="F:3-isopropylmalate dehydrogenase activity"/>
    <property type="evidence" value="ECO:0007669"/>
    <property type="project" value="UniProtKB-UniRule"/>
</dbReference>
<dbReference type="GO" id="GO:0000287">
    <property type="term" value="F:magnesium ion binding"/>
    <property type="evidence" value="ECO:0007669"/>
    <property type="project" value="InterPro"/>
</dbReference>
<dbReference type="GO" id="GO:0051287">
    <property type="term" value="F:NAD binding"/>
    <property type="evidence" value="ECO:0007669"/>
    <property type="project" value="InterPro"/>
</dbReference>
<dbReference type="GO" id="GO:0009098">
    <property type="term" value="P:L-leucine biosynthetic process"/>
    <property type="evidence" value="ECO:0007669"/>
    <property type="project" value="UniProtKB-UniRule"/>
</dbReference>
<dbReference type="FunFam" id="3.40.718.10:FF:000006">
    <property type="entry name" value="3-isopropylmalate dehydrogenase"/>
    <property type="match status" value="1"/>
</dbReference>
<dbReference type="Gene3D" id="3.40.718.10">
    <property type="entry name" value="Isopropylmalate Dehydrogenase"/>
    <property type="match status" value="1"/>
</dbReference>
<dbReference type="HAMAP" id="MF_01033">
    <property type="entry name" value="LeuB_type1"/>
    <property type="match status" value="1"/>
</dbReference>
<dbReference type="InterPro" id="IPR019818">
    <property type="entry name" value="IsoCit/isopropylmalate_DH_CS"/>
</dbReference>
<dbReference type="InterPro" id="IPR024084">
    <property type="entry name" value="IsoPropMal-DH-like_dom"/>
</dbReference>
<dbReference type="InterPro" id="IPR004429">
    <property type="entry name" value="Isopropylmalate_DH"/>
</dbReference>
<dbReference type="NCBIfam" id="TIGR00169">
    <property type="entry name" value="leuB"/>
    <property type="match status" value="1"/>
</dbReference>
<dbReference type="PANTHER" id="PTHR42979">
    <property type="entry name" value="3-ISOPROPYLMALATE DEHYDROGENASE"/>
    <property type="match status" value="1"/>
</dbReference>
<dbReference type="PANTHER" id="PTHR42979:SF1">
    <property type="entry name" value="3-ISOPROPYLMALATE DEHYDROGENASE"/>
    <property type="match status" value="1"/>
</dbReference>
<dbReference type="Pfam" id="PF00180">
    <property type="entry name" value="Iso_dh"/>
    <property type="match status" value="1"/>
</dbReference>
<dbReference type="SMART" id="SM01329">
    <property type="entry name" value="Iso_dh"/>
    <property type="match status" value="1"/>
</dbReference>
<dbReference type="SUPFAM" id="SSF53659">
    <property type="entry name" value="Isocitrate/Isopropylmalate dehydrogenase-like"/>
    <property type="match status" value="1"/>
</dbReference>
<dbReference type="PROSITE" id="PS00470">
    <property type="entry name" value="IDH_IMDH"/>
    <property type="match status" value="1"/>
</dbReference>
<name>LEU3_RHIEC</name>
<organism>
    <name type="scientific">Rhizobium etli (strain ATCC 51251 / DSM 11541 / JCM 21823 / NBRC 15573 / CFN 42)</name>
    <dbReference type="NCBI Taxonomy" id="347834"/>
    <lineage>
        <taxon>Bacteria</taxon>
        <taxon>Pseudomonadati</taxon>
        <taxon>Pseudomonadota</taxon>
        <taxon>Alphaproteobacteria</taxon>
        <taxon>Hyphomicrobiales</taxon>
        <taxon>Rhizobiaceae</taxon>
        <taxon>Rhizobium/Agrobacterium group</taxon>
        <taxon>Rhizobium</taxon>
    </lineage>
</organism>
<reference key="1">
    <citation type="journal article" date="2006" name="Proc. Natl. Acad. Sci. U.S.A.">
        <title>The partitioned Rhizobium etli genome: genetic and metabolic redundancy in seven interacting replicons.</title>
        <authorList>
            <person name="Gonzalez V."/>
            <person name="Santamaria R.I."/>
            <person name="Bustos P."/>
            <person name="Hernandez-Gonzalez I."/>
            <person name="Medrano-Soto A."/>
            <person name="Moreno-Hagelsieb G."/>
            <person name="Janga S.C."/>
            <person name="Ramirez M.A."/>
            <person name="Jimenez-Jacinto V."/>
            <person name="Collado-Vides J."/>
            <person name="Davila G."/>
        </authorList>
    </citation>
    <scope>NUCLEOTIDE SEQUENCE [LARGE SCALE GENOMIC DNA]</scope>
    <source>
        <strain>ATCC 51251 / DSM 11541 / JCM 21823 / NBRC 15573 / CFN 42</strain>
    </source>
</reference>
<keyword id="KW-0028">Amino-acid biosynthesis</keyword>
<keyword id="KW-0100">Branched-chain amino acid biosynthesis</keyword>
<keyword id="KW-0963">Cytoplasm</keyword>
<keyword id="KW-0432">Leucine biosynthesis</keyword>
<keyword id="KW-0460">Magnesium</keyword>
<keyword id="KW-0464">Manganese</keyword>
<keyword id="KW-0479">Metal-binding</keyword>
<keyword id="KW-0520">NAD</keyword>
<keyword id="KW-0560">Oxidoreductase</keyword>
<keyword id="KW-1185">Reference proteome</keyword>
<gene>
    <name evidence="1" type="primary">leuB</name>
    <name type="ordered locus">RHE_CH04093</name>
</gene>
<protein>
    <recommendedName>
        <fullName evidence="1">3-isopropylmalate dehydrogenase</fullName>
        <ecNumber evidence="1">1.1.1.85</ecNumber>
    </recommendedName>
    <alternativeName>
        <fullName evidence="1">3-IPM-DH</fullName>
    </alternativeName>
    <alternativeName>
        <fullName evidence="1">Beta-IPM dehydrogenase</fullName>
        <shortName evidence="1">IMDH</shortName>
    </alternativeName>
</protein>